<organism>
    <name type="scientific">Dehalococcoides mccartyi (strain ATCC BAA-2266 / KCTC 15142 / 195)</name>
    <name type="common">Dehalococcoides ethenogenes (strain 195)</name>
    <dbReference type="NCBI Taxonomy" id="243164"/>
    <lineage>
        <taxon>Bacteria</taxon>
        <taxon>Bacillati</taxon>
        <taxon>Chloroflexota</taxon>
        <taxon>Dehalococcoidia</taxon>
        <taxon>Dehalococcoidales</taxon>
        <taxon>Dehalococcoidaceae</taxon>
        <taxon>Dehalococcoides</taxon>
    </lineage>
</organism>
<proteinExistence type="inferred from homology"/>
<gene>
    <name evidence="1" type="primary">rpsG</name>
    <name type="ordered locus">DET0471</name>
</gene>
<dbReference type="EMBL" id="CP000027">
    <property type="protein sequence ID" value="AAW40194.1"/>
    <property type="molecule type" value="Genomic_DNA"/>
</dbReference>
<dbReference type="RefSeq" id="WP_010936248.1">
    <property type="nucleotide sequence ID" value="NC_002936.3"/>
</dbReference>
<dbReference type="SMR" id="Q3Z984"/>
<dbReference type="FunCoup" id="Q3Z984">
    <property type="interactions" value="352"/>
</dbReference>
<dbReference type="STRING" id="243164.DET0471"/>
<dbReference type="GeneID" id="3230158"/>
<dbReference type="KEGG" id="det:DET0471"/>
<dbReference type="PATRIC" id="fig|243164.10.peg.449"/>
<dbReference type="eggNOG" id="COG0049">
    <property type="taxonomic scope" value="Bacteria"/>
</dbReference>
<dbReference type="HOGENOM" id="CLU_072226_1_1_0"/>
<dbReference type="InParanoid" id="Q3Z984"/>
<dbReference type="Proteomes" id="UP000008289">
    <property type="component" value="Chromosome"/>
</dbReference>
<dbReference type="GO" id="GO:0015935">
    <property type="term" value="C:small ribosomal subunit"/>
    <property type="evidence" value="ECO:0007669"/>
    <property type="project" value="InterPro"/>
</dbReference>
<dbReference type="GO" id="GO:0019843">
    <property type="term" value="F:rRNA binding"/>
    <property type="evidence" value="ECO:0007669"/>
    <property type="project" value="UniProtKB-UniRule"/>
</dbReference>
<dbReference type="GO" id="GO:0003735">
    <property type="term" value="F:structural constituent of ribosome"/>
    <property type="evidence" value="ECO:0007669"/>
    <property type="project" value="InterPro"/>
</dbReference>
<dbReference type="GO" id="GO:0000049">
    <property type="term" value="F:tRNA binding"/>
    <property type="evidence" value="ECO:0007669"/>
    <property type="project" value="UniProtKB-UniRule"/>
</dbReference>
<dbReference type="GO" id="GO:0006412">
    <property type="term" value="P:translation"/>
    <property type="evidence" value="ECO:0007669"/>
    <property type="project" value="UniProtKB-UniRule"/>
</dbReference>
<dbReference type="CDD" id="cd14869">
    <property type="entry name" value="uS7_Bacteria"/>
    <property type="match status" value="1"/>
</dbReference>
<dbReference type="FunFam" id="1.10.455.10:FF:000001">
    <property type="entry name" value="30S ribosomal protein S7"/>
    <property type="match status" value="1"/>
</dbReference>
<dbReference type="Gene3D" id="1.10.455.10">
    <property type="entry name" value="Ribosomal protein S7 domain"/>
    <property type="match status" value="1"/>
</dbReference>
<dbReference type="HAMAP" id="MF_00480_B">
    <property type="entry name" value="Ribosomal_uS7_B"/>
    <property type="match status" value="1"/>
</dbReference>
<dbReference type="InterPro" id="IPR000235">
    <property type="entry name" value="Ribosomal_uS7"/>
</dbReference>
<dbReference type="InterPro" id="IPR005717">
    <property type="entry name" value="Ribosomal_uS7_bac/org-type"/>
</dbReference>
<dbReference type="InterPro" id="IPR023798">
    <property type="entry name" value="Ribosomal_uS7_dom"/>
</dbReference>
<dbReference type="InterPro" id="IPR036823">
    <property type="entry name" value="Ribosomal_uS7_dom_sf"/>
</dbReference>
<dbReference type="NCBIfam" id="TIGR01029">
    <property type="entry name" value="rpsG_bact"/>
    <property type="match status" value="1"/>
</dbReference>
<dbReference type="PANTHER" id="PTHR11205">
    <property type="entry name" value="RIBOSOMAL PROTEIN S7"/>
    <property type="match status" value="1"/>
</dbReference>
<dbReference type="Pfam" id="PF00177">
    <property type="entry name" value="Ribosomal_S7"/>
    <property type="match status" value="1"/>
</dbReference>
<dbReference type="PIRSF" id="PIRSF002122">
    <property type="entry name" value="RPS7p_RPS7a_RPS5e_RPS7o"/>
    <property type="match status" value="1"/>
</dbReference>
<dbReference type="SUPFAM" id="SSF47973">
    <property type="entry name" value="Ribosomal protein S7"/>
    <property type="match status" value="1"/>
</dbReference>
<accession>Q3Z984</accession>
<name>RS7_DEHM1</name>
<reference key="1">
    <citation type="journal article" date="2005" name="Science">
        <title>Genome sequence of the PCE-dechlorinating bacterium Dehalococcoides ethenogenes.</title>
        <authorList>
            <person name="Seshadri R."/>
            <person name="Adrian L."/>
            <person name="Fouts D.E."/>
            <person name="Eisen J.A."/>
            <person name="Phillippy A.M."/>
            <person name="Methe B.A."/>
            <person name="Ward N.L."/>
            <person name="Nelson W.C."/>
            <person name="DeBoy R.T."/>
            <person name="Khouri H.M."/>
            <person name="Kolonay J.F."/>
            <person name="Dodson R.J."/>
            <person name="Daugherty S.C."/>
            <person name="Brinkac L.M."/>
            <person name="Sullivan S.A."/>
            <person name="Madupu R."/>
            <person name="Nelson K.E."/>
            <person name="Kang K.H."/>
            <person name="Impraim M."/>
            <person name="Tran K."/>
            <person name="Robinson J.M."/>
            <person name="Forberger H.A."/>
            <person name="Fraser C.M."/>
            <person name="Zinder S.H."/>
            <person name="Heidelberg J.F."/>
        </authorList>
    </citation>
    <scope>NUCLEOTIDE SEQUENCE [LARGE SCALE GENOMIC DNA]</scope>
    <source>
        <strain>ATCC BAA-2266 / KCTC 15142 / 195</strain>
    </source>
</reference>
<sequence length="156" mass="17934">MPRRARKFKRAVAPDSRYNSLMLSNFINKLMMHGQKATAQRIVYDAIDIMGKQENKEGLAVFEQGLKNATPFIEVKPRRVGGATYQVPIEVRPDRAQTMAMRWIIKAARKRTGKSMAERLAAEMLEASREQGAAVKKREETHKMAEANRAFVHYRW</sequence>
<protein>
    <recommendedName>
        <fullName evidence="1">Small ribosomal subunit protein uS7</fullName>
    </recommendedName>
    <alternativeName>
        <fullName evidence="2">30S ribosomal protein S7</fullName>
    </alternativeName>
</protein>
<keyword id="KW-0687">Ribonucleoprotein</keyword>
<keyword id="KW-0689">Ribosomal protein</keyword>
<keyword id="KW-0694">RNA-binding</keyword>
<keyword id="KW-0699">rRNA-binding</keyword>
<keyword id="KW-0820">tRNA-binding</keyword>
<comment type="function">
    <text evidence="1">One of the primary rRNA binding proteins, it binds directly to 16S rRNA where it nucleates assembly of the head domain of the 30S subunit. Is located at the subunit interface close to the decoding center, probably blocks exit of the E-site tRNA.</text>
</comment>
<comment type="subunit">
    <text evidence="1">Part of the 30S ribosomal subunit. Contacts proteins S9 and S11.</text>
</comment>
<comment type="similarity">
    <text evidence="1">Belongs to the universal ribosomal protein uS7 family.</text>
</comment>
<feature type="chain" id="PRO_0000226496" description="Small ribosomal subunit protein uS7">
    <location>
        <begin position="1"/>
        <end position="156"/>
    </location>
</feature>
<evidence type="ECO:0000255" key="1">
    <source>
        <dbReference type="HAMAP-Rule" id="MF_00480"/>
    </source>
</evidence>
<evidence type="ECO:0000305" key="2"/>